<reference key="1">
    <citation type="journal article" date="1996" name="DNA Res.">
        <title>Sequence analysis of the genome of the unicellular cyanobacterium Synechocystis sp. strain PCC6803. II. Sequence determination of the entire genome and assignment of potential protein-coding regions.</title>
        <authorList>
            <person name="Kaneko T."/>
            <person name="Sato S."/>
            <person name="Kotani H."/>
            <person name="Tanaka A."/>
            <person name="Asamizu E."/>
            <person name="Nakamura Y."/>
            <person name="Miyajima N."/>
            <person name="Hirosawa M."/>
            <person name="Sugiura M."/>
            <person name="Sasamoto S."/>
            <person name="Kimura T."/>
            <person name="Hosouchi T."/>
            <person name="Matsuno A."/>
            <person name="Muraki A."/>
            <person name="Nakazaki N."/>
            <person name="Naruo K."/>
            <person name="Okumura S."/>
            <person name="Shimpo S."/>
            <person name="Takeuchi C."/>
            <person name="Wada T."/>
            <person name="Watanabe A."/>
            <person name="Yamada M."/>
            <person name="Yasuda M."/>
            <person name="Tabata S."/>
        </authorList>
    </citation>
    <scope>NUCLEOTIDE SEQUENCE [LARGE SCALE GENOMIC DNA]</scope>
    <source>
        <strain>ATCC 27184 / PCC 6803 / Kazusa</strain>
    </source>
</reference>
<reference key="2">
    <citation type="journal article" date="2012" name="J. Bacteriol.">
        <title>The cyanobacterial NAD kinase gene sll1415 is required for photoheterotrophic growth and cellular redox homeostasis in Synechocystis sp. strain PCC 6803.</title>
        <authorList>
            <person name="Gao H."/>
            <person name="Xu X."/>
        </authorList>
    </citation>
    <scope>FUNCTION</scope>
    <scope>DISRUPTION PHENOTYPE</scope>
    <source>
        <strain>ATCC 27184 / PCC 6803 / Kazusa</strain>
    </source>
</reference>
<reference key="3">
    <citation type="journal article" date="2016" name="J. Plant Physiol.">
        <title>Metabolomic analysis of NAD kinase-deficient mutants of the cyanobacterium Synechocystis sp. PCC 6803.</title>
        <authorList>
            <person name="Ishikawa Y."/>
            <person name="Miyagi A."/>
            <person name="Haishima Y."/>
            <person name="Ishikawa T."/>
            <person name="Nagano M."/>
            <person name="Yamaguchi M."/>
            <person name="Hihara Y."/>
            <person name="Kawai-Yamada M."/>
        </authorList>
    </citation>
    <scope>DISRUPTION PHENOTYPE</scope>
    <source>
        <strain>ATCC 27184 / PCC 6803 / Kazusa</strain>
    </source>
</reference>
<reference key="4">
    <citation type="journal article" date="2019" name="Plant J.">
        <title>One of the NAD kinases, sll1415, is required for the glucose metabolism of Synechocystis sp. PCC 6803.</title>
        <authorList>
            <person name="Ishikawa Y."/>
            <person name="Miyagi A."/>
            <person name="Ishikawa T."/>
            <person name="Nagano M."/>
            <person name="Yamaguchi M."/>
            <person name="Hihara Y."/>
            <person name="Kaneko Y."/>
            <person name="Kawai-Yamada M."/>
        </authorList>
    </citation>
    <scope>FUNCTION</scope>
    <scope>INDUCTION</scope>
    <scope>DISRUPTION PHENOTYPE</scope>
    <source>
        <strain>ATCC 27184 / PCC 6803 / Kazusa</strain>
    </source>
</reference>
<dbReference type="EC" id="2.7.1.23" evidence="1 5 6"/>
<dbReference type="EMBL" id="BA000022">
    <property type="protein sequence ID" value="BAA18022.1"/>
    <property type="molecule type" value="Genomic_DNA"/>
</dbReference>
<dbReference type="PIR" id="S75461">
    <property type="entry name" value="S75461"/>
</dbReference>
<dbReference type="SMR" id="P73955"/>
<dbReference type="FunCoup" id="P73955">
    <property type="interactions" value="463"/>
</dbReference>
<dbReference type="STRING" id="1148.gene:10498892"/>
<dbReference type="PaxDb" id="1148-1653106"/>
<dbReference type="EnsemblBacteria" id="BAA18022">
    <property type="protein sequence ID" value="BAA18022"/>
    <property type="gene ID" value="BAA18022"/>
</dbReference>
<dbReference type="KEGG" id="syn:sll1415"/>
<dbReference type="eggNOG" id="COG0061">
    <property type="taxonomic scope" value="Bacteria"/>
</dbReference>
<dbReference type="InParanoid" id="P73955"/>
<dbReference type="PhylomeDB" id="P73955"/>
<dbReference type="BRENDA" id="2.7.1.23">
    <property type="organism ID" value="382"/>
</dbReference>
<dbReference type="Proteomes" id="UP000001425">
    <property type="component" value="Chromosome"/>
</dbReference>
<dbReference type="GO" id="GO:0005737">
    <property type="term" value="C:cytoplasm"/>
    <property type="evidence" value="ECO:0007669"/>
    <property type="project" value="UniProtKB-SubCell"/>
</dbReference>
<dbReference type="GO" id="GO:0005524">
    <property type="term" value="F:ATP binding"/>
    <property type="evidence" value="ECO:0007669"/>
    <property type="project" value="UniProtKB-KW"/>
</dbReference>
<dbReference type="GO" id="GO:0046872">
    <property type="term" value="F:metal ion binding"/>
    <property type="evidence" value="ECO:0007669"/>
    <property type="project" value="UniProtKB-UniRule"/>
</dbReference>
<dbReference type="GO" id="GO:0051287">
    <property type="term" value="F:NAD binding"/>
    <property type="evidence" value="ECO:0007669"/>
    <property type="project" value="UniProtKB-ARBA"/>
</dbReference>
<dbReference type="GO" id="GO:0003951">
    <property type="term" value="F:NAD+ kinase activity"/>
    <property type="evidence" value="ECO:0000318"/>
    <property type="project" value="GO_Central"/>
</dbReference>
<dbReference type="GO" id="GO:0019674">
    <property type="term" value="P:NAD metabolic process"/>
    <property type="evidence" value="ECO:0007669"/>
    <property type="project" value="InterPro"/>
</dbReference>
<dbReference type="GO" id="GO:0006741">
    <property type="term" value="P:NADP biosynthetic process"/>
    <property type="evidence" value="ECO:0000318"/>
    <property type="project" value="GO_Central"/>
</dbReference>
<dbReference type="FunFam" id="2.60.200.30:FF:000029">
    <property type="entry name" value="NAD kinase 1"/>
    <property type="match status" value="1"/>
</dbReference>
<dbReference type="Gene3D" id="3.40.50.10330">
    <property type="entry name" value="Probable inorganic polyphosphate/atp-NAD kinase, domain 1"/>
    <property type="match status" value="1"/>
</dbReference>
<dbReference type="Gene3D" id="2.60.200.30">
    <property type="entry name" value="Probable inorganic polyphosphate/atp-NAD kinase, domain 2"/>
    <property type="match status" value="1"/>
</dbReference>
<dbReference type="HAMAP" id="MF_00361">
    <property type="entry name" value="NAD_kinase"/>
    <property type="match status" value="1"/>
</dbReference>
<dbReference type="InterPro" id="IPR017438">
    <property type="entry name" value="ATP-NAD_kinase_N"/>
</dbReference>
<dbReference type="InterPro" id="IPR017437">
    <property type="entry name" value="ATP-NAD_kinase_PpnK-typ_C"/>
</dbReference>
<dbReference type="InterPro" id="IPR016064">
    <property type="entry name" value="NAD/diacylglycerol_kinase_sf"/>
</dbReference>
<dbReference type="InterPro" id="IPR002504">
    <property type="entry name" value="NADK"/>
</dbReference>
<dbReference type="NCBIfam" id="NF002731">
    <property type="entry name" value="PRK02645.1"/>
    <property type="match status" value="1"/>
</dbReference>
<dbReference type="PANTHER" id="PTHR20275">
    <property type="entry name" value="NAD KINASE"/>
    <property type="match status" value="1"/>
</dbReference>
<dbReference type="PANTHER" id="PTHR20275:SF0">
    <property type="entry name" value="NAD KINASE"/>
    <property type="match status" value="1"/>
</dbReference>
<dbReference type="Pfam" id="PF01513">
    <property type="entry name" value="NAD_kinase"/>
    <property type="match status" value="1"/>
</dbReference>
<dbReference type="Pfam" id="PF20143">
    <property type="entry name" value="NAD_kinase_C"/>
    <property type="match status" value="1"/>
</dbReference>
<dbReference type="SUPFAM" id="SSF111331">
    <property type="entry name" value="NAD kinase/diacylglycerol kinase-like"/>
    <property type="match status" value="1"/>
</dbReference>
<proteinExistence type="evidence at transcript level"/>
<name>NADK1_SYNY3</name>
<accession>P73955</accession>
<comment type="function">
    <text evidence="2 4">Involved in the regulation of the intracellular balance of NAD and NADP, and is a key enzyme in the biosynthesis of NADP. Catalyzes specifically the phosphorylation on 2'-hydroxyl of the adenosine moiety of NAD to yield NADP (PubMed:22056937, PubMed:30693583). Essential for photoheterotrophic growth (PubMed:22056937, PubMed:30693583). Has a significant function in the oxidative pentose phosphate (OPP) pathway for glucose catabolism under photoheterotrophic conditions (PubMed:30693583). Is also involved in cellular redox homeostasis (PubMed:22056937).</text>
</comment>
<comment type="catalytic activity">
    <reaction evidence="1 5 6">
        <text>NAD(+) + ATP = ADP + NADP(+) + H(+)</text>
        <dbReference type="Rhea" id="RHEA:18629"/>
        <dbReference type="ChEBI" id="CHEBI:15378"/>
        <dbReference type="ChEBI" id="CHEBI:30616"/>
        <dbReference type="ChEBI" id="CHEBI:57540"/>
        <dbReference type="ChEBI" id="CHEBI:58349"/>
        <dbReference type="ChEBI" id="CHEBI:456216"/>
        <dbReference type="EC" id="2.7.1.23"/>
    </reaction>
</comment>
<comment type="cofactor">
    <cofactor evidence="1">
        <name>a divalent metal cation</name>
        <dbReference type="ChEBI" id="CHEBI:60240"/>
    </cofactor>
</comment>
<comment type="subcellular location">
    <subcellularLocation>
        <location evidence="1">Cytoplasm</location>
    </subcellularLocation>
</comment>
<comment type="induction">
    <text evidence="4">Induced after transfer to photoheterotrophic conditions.</text>
</comment>
<comment type="disruption phenotype">
    <text evidence="2 3 4">Insertion mutant shows a strong decrease in NADK activity compared to the wild-type (PubMed:22056937, PubMed:27657983). Under photoheterotrophic conditions, mutant shows a greatly reduced growth rate (PubMed:22056937, PubMed:30693583). Under photoautotrophic conditions, the growth curves of the wild-type parent and the mutant do not show any differences, and mutant shows a metabolic pattern similar to that of wild-type (PubMed:27657983). Deficient mutant accumulates glycogen under photoheterotrophic conditions (PubMed:30693583).</text>
</comment>
<comment type="miscellaneous">
    <text evidence="2 3 4">NADK activity derived from sll1415 makes probably a larger contribution to total cellular NADK activity than activity derived from slr0400 (PubMed:22056937, PubMed:27657983). Slr0400 cannot functionally replace sll1415 under photoheterotrophic conditions (PubMed:30693583).</text>
</comment>
<comment type="similarity">
    <text evidence="1">Belongs to the NAD kinase family.</text>
</comment>
<evidence type="ECO:0000255" key="1">
    <source>
        <dbReference type="HAMAP-Rule" id="MF_00361"/>
    </source>
</evidence>
<evidence type="ECO:0000269" key="2">
    <source>
    </source>
</evidence>
<evidence type="ECO:0000269" key="3">
    <source>
    </source>
</evidence>
<evidence type="ECO:0000269" key="4">
    <source>
    </source>
</evidence>
<evidence type="ECO:0000305" key="5">
    <source>
    </source>
</evidence>
<evidence type="ECO:0000305" key="6">
    <source>
    </source>
</evidence>
<keyword id="KW-0067">ATP-binding</keyword>
<keyword id="KW-0963">Cytoplasm</keyword>
<keyword id="KW-0418">Kinase</keyword>
<keyword id="KW-0520">NAD</keyword>
<keyword id="KW-0521">NADP</keyword>
<keyword id="KW-0547">Nucleotide-binding</keyword>
<keyword id="KW-1185">Reference proteome</keyword>
<keyword id="KW-0808">Transferase</keyword>
<protein>
    <recommendedName>
        <fullName evidence="1">NAD kinase 1</fullName>
        <ecNumber evidence="1 5 6">2.7.1.23</ecNumber>
    </recommendedName>
    <alternativeName>
        <fullName evidence="1">ATP-dependent NAD kinase 1</fullName>
    </alternativeName>
</protein>
<sequence>MELKQVIIAHKAGHNESKTYAERCARELEARGCKVLMGPSGIKDNPYPVFLASATEKIDLALVLGGDGTTLAAARHLSPEGIPILSVNVGGHLGFLTEPFDVFQDTQKVWDRLNQDRYAVSQRMMLAASLFEGDRRDPQMVGETYYCLNEMCIKPASIDRMPTAIIEVEVDGELIDQYQCDGLLVATPTGSTCYTSSANGPILHPGMDAIVITPICPLSLSSRPIVIPPGSSVNIWPLGDFELNTKLWTDGSLATGVWPGQRVGVWMAHRAAQFILLRESYSFYKTLRDKLQWAGARFLYDGNNKVN</sequence>
<organism>
    <name type="scientific">Synechocystis sp. (strain ATCC 27184 / PCC 6803 / Kazusa)</name>
    <dbReference type="NCBI Taxonomy" id="1111708"/>
    <lineage>
        <taxon>Bacteria</taxon>
        <taxon>Bacillati</taxon>
        <taxon>Cyanobacteriota</taxon>
        <taxon>Cyanophyceae</taxon>
        <taxon>Synechococcales</taxon>
        <taxon>Merismopediaceae</taxon>
        <taxon>Synechocystis</taxon>
    </lineage>
</organism>
<gene>
    <name evidence="1" type="primary">nadK1</name>
    <name type="ordered locus">sll1415</name>
</gene>
<feature type="chain" id="PRO_0000120679" description="NAD kinase 1">
    <location>
        <begin position="1"/>
        <end position="307"/>
    </location>
</feature>
<feature type="active site" description="Proton acceptor" evidence="1">
    <location>
        <position position="67"/>
    </location>
</feature>
<feature type="binding site" evidence="1">
    <location>
        <begin position="67"/>
        <end position="68"/>
    </location>
    <ligand>
        <name>NAD(+)</name>
        <dbReference type="ChEBI" id="CHEBI:57540"/>
    </ligand>
</feature>
<feature type="binding site" evidence="1">
    <location>
        <begin position="149"/>
        <end position="150"/>
    </location>
    <ligand>
        <name>NAD(+)</name>
        <dbReference type="ChEBI" id="CHEBI:57540"/>
    </ligand>
</feature>
<feature type="binding site" evidence="1">
    <location>
        <position position="160"/>
    </location>
    <ligand>
        <name>NAD(+)</name>
        <dbReference type="ChEBI" id="CHEBI:57540"/>
    </ligand>
</feature>
<feature type="binding site" evidence="1">
    <location>
        <position position="181"/>
    </location>
    <ligand>
        <name>NAD(+)</name>
        <dbReference type="ChEBI" id="CHEBI:57540"/>
    </ligand>
</feature>
<feature type="binding site" evidence="1">
    <location>
        <begin position="192"/>
        <end position="197"/>
    </location>
    <ligand>
        <name>NAD(+)</name>
        <dbReference type="ChEBI" id="CHEBI:57540"/>
    </ligand>
</feature>